<gene>
    <name evidence="1" type="primary">glyQ</name>
    <name type="ordered locus">FTN_0519</name>
</gene>
<keyword id="KW-0030">Aminoacyl-tRNA synthetase</keyword>
<keyword id="KW-0067">ATP-binding</keyword>
<keyword id="KW-0963">Cytoplasm</keyword>
<keyword id="KW-0436">Ligase</keyword>
<keyword id="KW-0547">Nucleotide-binding</keyword>
<keyword id="KW-0648">Protein biosynthesis</keyword>
<sequence length="296" mass="34365">MLTFQEIILKLHHYWASKGCAIIQPLDMEVGAGTFHPATTLRAIGPEPWTAAYVQPSRRPTDGRYGENPNRTQHYYQYQVVMKPSPDDIQELYLGSLRELGIDPLENDIRFVEDNWESPTLGAWGLGWEVWSNGMEITQFTYFQQVGGLECKPVMGEITYGLERLAMYIQNVDSMYDILWANTQNGPLYYRDVFLQNEVEMSTYNFEEANVEELFKQFDLLEKEGYRLIEKNLPIPAYEFVLKASHTFNLLDARHAISVTERQGYILRVRKLALEVAKEYYSAREKLGFPAFKKDN</sequence>
<comment type="catalytic activity">
    <reaction evidence="1">
        <text>tRNA(Gly) + glycine + ATP = glycyl-tRNA(Gly) + AMP + diphosphate</text>
        <dbReference type="Rhea" id="RHEA:16013"/>
        <dbReference type="Rhea" id="RHEA-COMP:9664"/>
        <dbReference type="Rhea" id="RHEA-COMP:9683"/>
        <dbReference type="ChEBI" id="CHEBI:30616"/>
        <dbReference type="ChEBI" id="CHEBI:33019"/>
        <dbReference type="ChEBI" id="CHEBI:57305"/>
        <dbReference type="ChEBI" id="CHEBI:78442"/>
        <dbReference type="ChEBI" id="CHEBI:78522"/>
        <dbReference type="ChEBI" id="CHEBI:456215"/>
        <dbReference type="EC" id="6.1.1.14"/>
    </reaction>
</comment>
<comment type="subunit">
    <text evidence="1">Tetramer of two alpha and two beta subunits.</text>
</comment>
<comment type="subcellular location">
    <subcellularLocation>
        <location evidence="1">Cytoplasm</location>
    </subcellularLocation>
</comment>
<comment type="similarity">
    <text evidence="1">Belongs to the class-II aminoacyl-tRNA synthetase family.</text>
</comment>
<accession>A0Q599</accession>
<dbReference type="EC" id="6.1.1.14" evidence="1"/>
<dbReference type="EMBL" id="CP000439">
    <property type="protein sequence ID" value="ABK89414.1"/>
    <property type="molecule type" value="Genomic_DNA"/>
</dbReference>
<dbReference type="RefSeq" id="WP_003038532.1">
    <property type="nucleotide sequence ID" value="NC_008601.1"/>
</dbReference>
<dbReference type="SMR" id="A0Q599"/>
<dbReference type="KEGG" id="ftn:FTN_0519"/>
<dbReference type="KEGG" id="ftx:AW25_1510"/>
<dbReference type="BioCyc" id="FTUL401614:G1G75-541-MONOMER"/>
<dbReference type="Proteomes" id="UP000000762">
    <property type="component" value="Chromosome"/>
</dbReference>
<dbReference type="GO" id="GO:0005829">
    <property type="term" value="C:cytosol"/>
    <property type="evidence" value="ECO:0007669"/>
    <property type="project" value="TreeGrafter"/>
</dbReference>
<dbReference type="GO" id="GO:0005524">
    <property type="term" value="F:ATP binding"/>
    <property type="evidence" value="ECO:0007669"/>
    <property type="project" value="UniProtKB-UniRule"/>
</dbReference>
<dbReference type="GO" id="GO:0004820">
    <property type="term" value="F:glycine-tRNA ligase activity"/>
    <property type="evidence" value="ECO:0007669"/>
    <property type="project" value="UniProtKB-UniRule"/>
</dbReference>
<dbReference type="GO" id="GO:0006426">
    <property type="term" value="P:glycyl-tRNA aminoacylation"/>
    <property type="evidence" value="ECO:0007669"/>
    <property type="project" value="UniProtKB-UniRule"/>
</dbReference>
<dbReference type="CDD" id="cd00733">
    <property type="entry name" value="GlyRS_alpha_core"/>
    <property type="match status" value="1"/>
</dbReference>
<dbReference type="FunFam" id="3.30.930.10:FF:000006">
    <property type="entry name" value="Glycine--tRNA ligase alpha subunit"/>
    <property type="match status" value="1"/>
</dbReference>
<dbReference type="Gene3D" id="3.30.930.10">
    <property type="entry name" value="Bira Bifunctional Protein, Domain 2"/>
    <property type="match status" value="1"/>
</dbReference>
<dbReference type="Gene3D" id="1.20.58.180">
    <property type="entry name" value="Class II aaRS and biotin synthetases, domain 2"/>
    <property type="match status" value="1"/>
</dbReference>
<dbReference type="HAMAP" id="MF_00254">
    <property type="entry name" value="Gly_tRNA_synth_alpha"/>
    <property type="match status" value="1"/>
</dbReference>
<dbReference type="InterPro" id="IPR045864">
    <property type="entry name" value="aa-tRNA-synth_II/BPL/LPL"/>
</dbReference>
<dbReference type="InterPro" id="IPR006194">
    <property type="entry name" value="Gly-tRNA-synth_heterodimer"/>
</dbReference>
<dbReference type="InterPro" id="IPR002310">
    <property type="entry name" value="Gly-tRNA_ligase_asu"/>
</dbReference>
<dbReference type="NCBIfam" id="TIGR00388">
    <property type="entry name" value="glyQ"/>
    <property type="match status" value="1"/>
</dbReference>
<dbReference type="NCBIfam" id="NF006827">
    <property type="entry name" value="PRK09348.1"/>
    <property type="match status" value="1"/>
</dbReference>
<dbReference type="PANTHER" id="PTHR30075:SF2">
    <property type="entry name" value="GLYCINE--TRNA LIGASE, CHLOROPLASTIC_MITOCHONDRIAL 2"/>
    <property type="match status" value="1"/>
</dbReference>
<dbReference type="PANTHER" id="PTHR30075">
    <property type="entry name" value="GLYCYL-TRNA SYNTHETASE"/>
    <property type="match status" value="1"/>
</dbReference>
<dbReference type="Pfam" id="PF02091">
    <property type="entry name" value="tRNA-synt_2e"/>
    <property type="match status" value="1"/>
</dbReference>
<dbReference type="PRINTS" id="PR01044">
    <property type="entry name" value="TRNASYNTHGA"/>
</dbReference>
<dbReference type="SUPFAM" id="SSF55681">
    <property type="entry name" value="Class II aaRS and biotin synthetases"/>
    <property type="match status" value="1"/>
</dbReference>
<dbReference type="PROSITE" id="PS50861">
    <property type="entry name" value="AA_TRNA_LIGASE_II_GLYAB"/>
    <property type="match status" value="1"/>
</dbReference>
<organism>
    <name type="scientific">Francisella tularensis subsp. novicida (strain U112)</name>
    <dbReference type="NCBI Taxonomy" id="401614"/>
    <lineage>
        <taxon>Bacteria</taxon>
        <taxon>Pseudomonadati</taxon>
        <taxon>Pseudomonadota</taxon>
        <taxon>Gammaproteobacteria</taxon>
        <taxon>Thiotrichales</taxon>
        <taxon>Francisellaceae</taxon>
        <taxon>Francisella</taxon>
    </lineage>
</organism>
<reference key="1">
    <citation type="journal article" date="2007" name="Genome Biol.">
        <title>Comparison of Francisella tularensis genomes reveals evolutionary events associated with the emergence of human pathogenic strains.</title>
        <authorList>
            <person name="Rohmer L."/>
            <person name="Fong C."/>
            <person name="Abmayr S."/>
            <person name="Wasnick M."/>
            <person name="Larson Freeman T.J."/>
            <person name="Radey M."/>
            <person name="Guina T."/>
            <person name="Svensson K."/>
            <person name="Hayden H.S."/>
            <person name="Jacobs M."/>
            <person name="Gallagher L.A."/>
            <person name="Manoil C."/>
            <person name="Ernst R.K."/>
            <person name="Drees B."/>
            <person name="Buckley D."/>
            <person name="Haugen E."/>
            <person name="Bovee D."/>
            <person name="Zhou Y."/>
            <person name="Chang J."/>
            <person name="Levy R."/>
            <person name="Lim R."/>
            <person name="Gillett W."/>
            <person name="Guenthener D."/>
            <person name="Kang A."/>
            <person name="Shaffer S.A."/>
            <person name="Taylor G."/>
            <person name="Chen J."/>
            <person name="Gallis B."/>
            <person name="D'Argenio D.A."/>
            <person name="Forsman M."/>
            <person name="Olson M.V."/>
            <person name="Goodlett D.R."/>
            <person name="Kaul R."/>
            <person name="Miller S.I."/>
            <person name="Brittnacher M.J."/>
        </authorList>
    </citation>
    <scope>NUCLEOTIDE SEQUENCE [LARGE SCALE GENOMIC DNA]</scope>
    <source>
        <strain>U112</strain>
    </source>
</reference>
<feature type="chain" id="PRO_1000101194" description="Glycine--tRNA ligase alpha subunit">
    <location>
        <begin position="1"/>
        <end position="296"/>
    </location>
</feature>
<protein>
    <recommendedName>
        <fullName evidence="1">Glycine--tRNA ligase alpha subunit</fullName>
        <ecNumber evidence="1">6.1.1.14</ecNumber>
    </recommendedName>
    <alternativeName>
        <fullName evidence="1">Glycyl-tRNA synthetase alpha subunit</fullName>
        <shortName evidence="1">GlyRS</shortName>
    </alternativeName>
</protein>
<evidence type="ECO:0000255" key="1">
    <source>
        <dbReference type="HAMAP-Rule" id="MF_00254"/>
    </source>
</evidence>
<name>SYGA_FRATN</name>
<proteinExistence type="inferred from homology"/>